<keyword id="KW-0963">Cytoplasm</keyword>
<keyword id="KW-0227">DNA damage</keyword>
<keyword id="KW-0233">DNA recombination</keyword>
<keyword id="KW-0234">DNA repair</keyword>
<keyword id="KW-0238">DNA-binding</keyword>
<keyword id="KW-1185">Reference proteome</keyword>
<sequence>MIVGLRGTIIRLEPMYAEIDVGGVIYGMQMSLNATSMLQTKIDSQPDAPVKIICAQIIREDAHLLFGFCEEIEKQTFERLIKISGVGPKVAIAILSTYTPTHFAKIIADKDIEALKKVPGIGVKGAAKIMVDIAGFFAQLLQSQEESIAPSNNLKYEASLALQSLGFKRNEIQKVLEHIEALSVSEIVKEALKRLA</sequence>
<accession>Q7VIU0</accession>
<feature type="chain" id="PRO_0000094638" description="Holliday junction branch migration complex subunit RuvA">
    <location>
        <begin position="1"/>
        <end position="196"/>
    </location>
</feature>
<feature type="region of interest" description="Domain I" evidence="1">
    <location>
        <begin position="1"/>
        <end position="69"/>
    </location>
</feature>
<feature type="region of interest" description="Domain II" evidence="1">
    <location>
        <begin position="70"/>
        <end position="148"/>
    </location>
</feature>
<feature type="region of interest" description="Flexible linker" evidence="1">
    <location>
        <begin position="149"/>
        <end position="157"/>
    </location>
</feature>
<feature type="region of interest" description="Domain III" evidence="1">
    <location>
        <begin position="157"/>
        <end position="196"/>
    </location>
</feature>
<evidence type="ECO:0000255" key="1">
    <source>
        <dbReference type="HAMAP-Rule" id="MF_00031"/>
    </source>
</evidence>
<name>RUVA_HELHP</name>
<reference key="1">
    <citation type="journal article" date="2003" name="Proc. Natl. Acad. Sci. U.S.A.">
        <title>The complete genome sequence of the carcinogenic bacterium Helicobacter hepaticus.</title>
        <authorList>
            <person name="Suerbaum S."/>
            <person name="Josenhans C."/>
            <person name="Sterzenbach T."/>
            <person name="Drescher B."/>
            <person name="Brandt P."/>
            <person name="Bell M."/>
            <person name="Droege M."/>
            <person name="Fartmann B."/>
            <person name="Fischer H.-P."/>
            <person name="Ge Z."/>
            <person name="Hoerster A."/>
            <person name="Holland R."/>
            <person name="Klein K."/>
            <person name="Koenig J."/>
            <person name="Macko L."/>
            <person name="Mendz G.L."/>
            <person name="Nyakatura G."/>
            <person name="Schauer D.B."/>
            <person name="Shen Z."/>
            <person name="Weber J."/>
            <person name="Frosch M."/>
            <person name="Fox J.G."/>
        </authorList>
    </citation>
    <scope>NUCLEOTIDE SEQUENCE [LARGE SCALE GENOMIC DNA]</scope>
    <source>
        <strain>ATCC 51449 / 3B1</strain>
    </source>
</reference>
<dbReference type="EMBL" id="AE017125">
    <property type="protein sequence ID" value="AAP77111.1"/>
    <property type="molecule type" value="Genomic_DNA"/>
</dbReference>
<dbReference type="RefSeq" id="WP_011115356.1">
    <property type="nucleotide sequence ID" value="NC_004917.1"/>
</dbReference>
<dbReference type="SMR" id="Q7VIU0"/>
<dbReference type="STRING" id="235279.HH_0514"/>
<dbReference type="KEGG" id="hhe:HH_0514"/>
<dbReference type="eggNOG" id="COG0632">
    <property type="taxonomic scope" value="Bacteria"/>
</dbReference>
<dbReference type="HOGENOM" id="CLU_087936_3_1_7"/>
<dbReference type="OrthoDB" id="5293449at2"/>
<dbReference type="Proteomes" id="UP000002495">
    <property type="component" value="Chromosome"/>
</dbReference>
<dbReference type="GO" id="GO:0005737">
    <property type="term" value="C:cytoplasm"/>
    <property type="evidence" value="ECO:0007669"/>
    <property type="project" value="UniProtKB-SubCell"/>
</dbReference>
<dbReference type="GO" id="GO:0009379">
    <property type="term" value="C:Holliday junction helicase complex"/>
    <property type="evidence" value="ECO:0007669"/>
    <property type="project" value="InterPro"/>
</dbReference>
<dbReference type="GO" id="GO:0048476">
    <property type="term" value="C:Holliday junction resolvase complex"/>
    <property type="evidence" value="ECO:0007669"/>
    <property type="project" value="UniProtKB-UniRule"/>
</dbReference>
<dbReference type="GO" id="GO:0005524">
    <property type="term" value="F:ATP binding"/>
    <property type="evidence" value="ECO:0007669"/>
    <property type="project" value="InterPro"/>
</dbReference>
<dbReference type="GO" id="GO:0000400">
    <property type="term" value="F:four-way junction DNA binding"/>
    <property type="evidence" value="ECO:0007669"/>
    <property type="project" value="UniProtKB-UniRule"/>
</dbReference>
<dbReference type="GO" id="GO:0009378">
    <property type="term" value="F:four-way junction helicase activity"/>
    <property type="evidence" value="ECO:0007669"/>
    <property type="project" value="InterPro"/>
</dbReference>
<dbReference type="GO" id="GO:0006310">
    <property type="term" value="P:DNA recombination"/>
    <property type="evidence" value="ECO:0007669"/>
    <property type="project" value="UniProtKB-UniRule"/>
</dbReference>
<dbReference type="GO" id="GO:0006281">
    <property type="term" value="P:DNA repair"/>
    <property type="evidence" value="ECO:0007669"/>
    <property type="project" value="UniProtKB-UniRule"/>
</dbReference>
<dbReference type="CDD" id="cd14332">
    <property type="entry name" value="UBA_RuvA_C"/>
    <property type="match status" value="1"/>
</dbReference>
<dbReference type="Gene3D" id="1.10.150.20">
    <property type="entry name" value="5' to 3' exonuclease, C-terminal subdomain"/>
    <property type="match status" value="1"/>
</dbReference>
<dbReference type="Gene3D" id="1.10.8.10">
    <property type="entry name" value="DNA helicase RuvA subunit, C-terminal domain"/>
    <property type="match status" value="1"/>
</dbReference>
<dbReference type="Gene3D" id="2.40.50.140">
    <property type="entry name" value="Nucleic acid-binding proteins"/>
    <property type="match status" value="1"/>
</dbReference>
<dbReference type="HAMAP" id="MF_00031">
    <property type="entry name" value="DNA_HJ_migration_RuvA"/>
    <property type="match status" value="1"/>
</dbReference>
<dbReference type="InterPro" id="IPR013849">
    <property type="entry name" value="DNA_helicase_Holl-junc_RuvA_I"/>
</dbReference>
<dbReference type="InterPro" id="IPR003583">
    <property type="entry name" value="Hlx-hairpin-Hlx_DNA-bd_motif"/>
</dbReference>
<dbReference type="InterPro" id="IPR012340">
    <property type="entry name" value="NA-bd_OB-fold"/>
</dbReference>
<dbReference type="InterPro" id="IPR000085">
    <property type="entry name" value="RuvA"/>
</dbReference>
<dbReference type="InterPro" id="IPR010994">
    <property type="entry name" value="RuvA_2-like"/>
</dbReference>
<dbReference type="InterPro" id="IPR011114">
    <property type="entry name" value="RuvA_C"/>
</dbReference>
<dbReference type="InterPro" id="IPR036267">
    <property type="entry name" value="RuvA_C_sf"/>
</dbReference>
<dbReference type="NCBIfam" id="TIGR00084">
    <property type="entry name" value="ruvA"/>
    <property type="match status" value="1"/>
</dbReference>
<dbReference type="Pfam" id="PF14520">
    <property type="entry name" value="HHH_5"/>
    <property type="match status" value="1"/>
</dbReference>
<dbReference type="Pfam" id="PF07499">
    <property type="entry name" value="RuvA_C"/>
    <property type="match status" value="1"/>
</dbReference>
<dbReference type="Pfam" id="PF01330">
    <property type="entry name" value="RuvA_N"/>
    <property type="match status" value="1"/>
</dbReference>
<dbReference type="SMART" id="SM00278">
    <property type="entry name" value="HhH1"/>
    <property type="match status" value="2"/>
</dbReference>
<dbReference type="SUPFAM" id="SSF46929">
    <property type="entry name" value="DNA helicase RuvA subunit, C-terminal domain"/>
    <property type="match status" value="1"/>
</dbReference>
<dbReference type="SUPFAM" id="SSF50249">
    <property type="entry name" value="Nucleic acid-binding proteins"/>
    <property type="match status" value="1"/>
</dbReference>
<dbReference type="SUPFAM" id="SSF47781">
    <property type="entry name" value="RuvA domain 2-like"/>
    <property type="match status" value="1"/>
</dbReference>
<protein>
    <recommendedName>
        <fullName evidence="1">Holliday junction branch migration complex subunit RuvA</fullName>
    </recommendedName>
</protein>
<gene>
    <name evidence="1" type="primary">ruvA</name>
    <name type="ordered locus">HH_0514</name>
</gene>
<organism>
    <name type="scientific">Helicobacter hepaticus (strain ATCC 51449 / 3B1)</name>
    <dbReference type="NCBI Taxonomy" id="235279"/>
    <lineage>
        <taxon>Bacteria</taxon>
        <taxon>Pseudomonadati</taxon>
        <taxon>Campylobacterota</taxon>
        <taxon>Epsilonproteobacteria</taxon>
        <taxon>Campylobacterales</taxon>
        <taxon>Helicobacteraceae</taxon>
        <taxon>Helicobacter</taxon>
    </lineage>
</organism>
<comment type="function">
    <text evidence="1">The RuvA-RuvB-RuvC complex processes Holliday junction (HJ) DNA during genetic recombination and DNA repair, while the RuvA-RuvB complex plays an important role in the rescue of blocked DNA replication forks via replication fork reversal (RFR). RuvA specifically binds to HJ cruciform DNA, conferring on it an open structure. The RuvB hexamer acts as an ATP-dependent pump, pulling dsDNA into and through the RuvAB complex. HJ branch migration allows RuvC to scan DNA until it finds its consensus sequence, where it cleaves and resolves the cruciform DNA.</text>
</comment>
<comment type="subunit">
    <text evidence="1">Homotetramer. Forms an RuvA(8)-RuvB(12)-Holliday junction (HJ) complex. HJ DNA is sandwiched between 2 RuvA tetramers; dsDNA enters through RuvA and exits via RuvB. An RuvB hexamer assembles on each DNA strand where it exits the tetramer. Each RuvB hexamer is contacted by two RuvA subunits (via domain III) on 2 adjacent RuvB subunits; this complex drives branch migration. In the full resolvosome a probable DNA-RuvA(4)-RuvB(12)-RuvC(2) complex forms which resolves the HJ.</text>
</comment>
<comment type="subcellular location">
    <subcellularLocation>
        <location evidence="1">Cytoplasm</location>
    </subcellularLocation>
</comment>
<comment type="domain">
    <text evidence="1">Has three domains with a flexible linker between the domains II and III and assumes an 'L' shape. Domain III is highly mobile and contacts RuvB.</text>
</comment>
<comment type="similarity">
    <text evidence="1">Belongs to the RuvA family.</text>
</comment>
<proteinExistence type="inferred from homology"/>